<sequence>MKVIAVTGYKPFELGIFKNDHPGVECIKKALRRKLTAFVEGGLEWVIISGQLGVELWTAEVVFEIQVEYPDLKLAVFTPFLEQEEGWKEDNREYYEFILSQADHVDSITKRKYESPEQFKLKNQIFIEKSDALLAVYDEEKPGSPKYIVEAAKKKGEIENYHSYFILFSDLQDIIEEEQWNNAE</sequence>
<reference key="1">
    <citation type="submission" date="2009-04" db="EMBL/GenBank/DDBJ databases">
        <title>Genome sequence of Bacillus anthracis A0248.</title>
        <authorList>
            <person name="Dodson R.J."/>
            <person name="Munk A.C."/>
            <person name="Bruce D."/>
            <person name="Detter C."/>
            <person name="Tapia R."/>
            <person name="Sutton G."/>
            <person name="Sims D."/>
            <person name="Brettin T."/>
        </authorList>
    </citation>
    <scope>NUCLEOTIDE SEQUENCE [LARGE SCALE GENOMIC DNA]</scope>
    <source>
        <strain>A0248</strain>
    </source>
</reference>
<name>Y1648_BACAA</name>
<gene>
    <name type="ordered locus">BAA_1648</name>
</gene>
<feature type="chain" id="PRO_1000185578" description="UPF0398 protein BAA_1648">
    <location>
        <begin position="1"/>
        <end position="184"/>
    </location>
</feature>
<accession>C3P5S8</accession>
<protein>
    <recommendedName>
        <fullName evidence="1">UPF0398 protein BAA_1648</fullName>
    </recommendedName>
</protein>
<evidence type="ECO:0000255" key="1">
    <source>
        <dbReference type="HAMAP-Rule" id="MF_01575"/>
    </source>
</evidence>
<proteinExistence type="inferred from homology"/>
<organism>
    <name type="scientific">Bacillus anthracis (strain A0248)</name>
    <dbReference type="NCBI Taxonomy" id="592021"/>
    <lineage>
        <taxon>Bacteria</taxon>
        <taxon>Bacillati</taxon>
        <taxon>Bacillota</taxon>
        <taxon>Bacilli</taxon>
        <taxon>Bacillales</taxon>
        <taxon>Bacillaceae</taxon>
        <taxon>Bacillus</taxon>
        <taxon>Bacillus cereus group</taxon>
    </lineage>
</organism>
<dbReference type="EMBL" id="CP001598">
    <property type="protein sequence ID" value="ACQ49645.1"/>
    <property type="molecule type" value="Genomic_DNA"/>
</dbReference>
<dbReference type="RefSeq" id="WP_000862924.1">
    <property type="nucleotide sequence ID" value="NC_012659.1"/>
</dbReference>
<dbReference type="SMR" id="C3P5S8"/>
<dbReference type="GeneID" id="45021552"/>
<dbReference type="KEGG" id="bai:BAA_1648"/>
<dbReference type="HOGENOM" id="CLU_105319_0_0_9"/>
<dbReference type="Gene3D" id="3.40.50.450">
    <property type="match status" value="1"/>
</dbReference>
<dbReference type="HAMAP" id="MF_01575">
    <property type="entry name" value="UPF0398"/>
    <property type="match status" value="1"/>
</dbReference>
<dbReference type="InterPro" id="IPR010697">
    <property type="entry name" value="YspA"/>
</dbReference>
<dbReference type="NCBIfam" id="NF010181">
    <property type="entry name" value="PRK13660.1"/>
    <property type="match status" value="1"/>
</dbReference>
<dbReference type="PANTHER" id="PTHR38440:SF1">
    <property type="entry name" value="UPF0398 PROTEIN SPR0331"/>
    <property type="match status" value="1"/>
</dbReference>
<dbReference type="PANTHER" id="PTHR38440">
    <property type="entry name" value="UPF0398 PROTEIN YPSA"/>
    <property type="match status" value="1"/>
</dbReference>
<dbReference type="Pfam" id="PF06908">
    <property type="entry name" value="YpsA"/>
    <property type="match status" value="1"/>
</dbReference>
<dbReference type="PIRSF" id="PIRSF021290">
    <property type="entry name" value="DUF1273"/>
    <property type="match status" value="1"/>
</dbReference>
<dbReference type="SUPFAM" id="SSF102405">
    <property type="entry name" value="MCP/YpsA-like"/>
    <property type="match status" value="1"/>
</dbReference>
<comment type="similarity">
    <text evidence="1">Belongs to the UPF0398 family.</text>
</comment>